<gene>
    <name evidence="1" type="primary">tig</name>
    <name type="ordered locus">Pfl01_3698</name>
</gene>
<proteinExistence type="inferred from homology"/>
<feature type="chain" id="PRO_0000256593" description="Trigger factor">
    <location>
        <begin position="1"/>
        <end position="436"/>
    </location>
</feature>
<feature type="domain" description="PPIase FKBP-type" evidence="1">
    <location>
        <begin position="161"/>
        <end position="246"/>
    </location>
</feature>
<comment type="function">
    <text evidence="1">Involved in protein export. Acts as a chaperone by maintaining the newly synthesized protein in an open conformation. Functions as a peptidyl-prolyl cis-trans isomerase.</text>
</comment>
<comment type="catalytic activity">
    <reaction evidence="1">
        <text>[protein]-peptidylproline (omega=180) = [protein]-peptidylproline (omega=0)</text>
        <dbReference type="Rhea" id="RHEA:16237"/>
        <dbReference type="Rhea" id="RHEA-COMP:10747"/>
        <dbReference type="Rhea" id="RHEA-COMP:10748"/>
        <dbReference type="ChEBI" id="CHEBI:83833"/>
        <dbReference type="ChEBI" id="CHEBI:83834"/>
        <dbReference type="EC" id="5.2.1.8"/>
    </reaction>
</comment>
<comment type="subcellular location">
    <subcellularLocation>
        <location>Cytoplasm</location>
    </subcellularLocation>
    <text evidence="1">About half TF is bound to the ribosome near the polypeptide exit tunnel while the other half is free in the cytoplasm.</text>
</comment>
<comment type="domain">
    <text evidence="1">Consists of 3 domains; the N-terminus binds the ribosome, the middle domain has PPIase activity, while the C-terminus has intrinsic chaperone activity on its own.</text>
</comment>
<comment type="similarity">
    <text evidence="1">Belongs to the FKBP-type PPIase family. Tig subfamily.</text>
</comment>
<keyword id="KW-0131">Cell cycle</keyword>
<keyword id="KW-0132">Cell division</keyword>
<keyword id="KW-0143">Chaperone</keyword>
<keyword id="KW-0963">Cytoplasm</keyword>
<keyword id="KW-0413">Isomerase</keyword>
<keyword id="KW-0697">Rotamase</keyword>
<sequence>MQVSVENTTALERRMSITVPAERIETQVNKRLQQTAQKAKIAGFRPGKVPMSEIKRRFGADARQEAIGDVIQSSFYEAVVEQKLNPAGSPSIEPKSLEAGKDLEYVAVFEVFPEFTVAGFEGITVERLSADVADADLDKMLDILRKQNTRFEVADRAAQNEDQLNIDFVGKVDGEVFAGGSAKGTQLVLGSGRMIPGFEEGLVGAKAGEERVLNLTFPEDYQNLDLAGKTAEFTVTVNTVSEPKLPELNEEFFAQFGIKESGIDGFRTEVRKNMERELRQAIKSKVKNQVMDGLLATNPIEVPKALLSNEVDRLRVQAVQQFGGNIKPDQLPAELFEEQAKRRVVLGLIVAEVVKQFDLKPDEARVREMIQEMASAYQEPEQVVSWYYKNEQQLNEVRSVVLEEQVVDTVLQKASVTDKSVSYEEAVKPVEAPKAD</sequence>
<dbReference type="EC" id="5.2.1.8" evidence="1"/>
<dbReference type="EMBL" id="CP000094">
    <property type="protein sequence ID" value="ABA75436.1"/>
    <property type="molecule type" value="Genomic_DNA"/>
</dbReference>
<dbReference type="RefSeq" id="WP_011335037.1">
    <property type="nucleotide sequence ID" value="NC_007492.2"/>
</dbReference>
<dbReference type="SMR" id="Q3K9W8"/>
<dbReference type="KEGG" id="pfo:Pfl01_3698"/>
<dbReference type="eggNOG" id="COG0544">
    <property type="taxonomic scope" value="Bacteria"/>
</dbReference>
<dbReference type="HOGENOM" id="CLU_033058_2_0_6"/>
<dbReference type="Proteomes" id="UP000002704">
    <property type="component" value="Chromosome"/>
</dbReference>
<dbReference type="GO" id="GO:0005737">
    <property type="term" value="C:cytoplasm"/>
    <property type="evidence" value="ECO:0007669"/>
    <property type="project" value="UniProtKB-SubCell"/>
</dbReference>
<dbReference type="GO" id="GO:0003755">
    <property type="term" value="F:peptidyl-prolyl cis-trans isomerase activity"/>
    <property type="evidence" value="ECO:0007669"/>
    <property type="project" value="UniProtKB-UniRule"/>
</dbReference>
<dbReference type="GO" id="GO:0044183">
    <property type="term" value="F:protein folding chaperone"/>
    <property type="evidence" value="ECO:0007669"/>
    <property type="project" value="TreeGrafter"/>
</dbReference>
<dbReference type="GO" id="GO:0043022">
    <property type="term" value="F:ribosome binding"/>
    <property type="evidence" value="ECO:0007669"/>
    <property type="project" value="TreeGrafter"/>
</dbReference>
<dbReference type="GO" id="GO:0051083">
    <property type="term" value="P:'de novo' cotranslational protein folding"/>
    <property type="evidence" value="ECO:0007669"/>
    <property type="project" value="TreeGrafter"/>
</dbReference>
<dbReference type="GO" id="GO:0051301">
    <property type="term" value="P:cell division"/>
    <property type="evidence" value="ECO:0007669"/>
    <property type="project" value="UniProtKB-KW"/>
</dbReference>
<dbReference type="GO" id="GO:0061077">
    <property type="term" value="P:chaperone-mediated protein folding"/>
    <property type="evidence" value="ECO:0007669"/>
    <property type="project" value="TreeGrafter"/>
</dbReference>
<dbReference type="GO" id="GO:0015031">
    <property type="term" value="P:protein transport"/>
    <property type="evidence" value="ECO:0007669"/>
    <property type="project" value="UniProtKB-UniRule"/>
</dbReference>
<dbReference type="GO" id="GO:0043335">
    <property type="term" value="P:protein unfolding"/>
    <property type="evidence" value="ECO:0007669"/>
    <property type="project" value="TreeGrafter"/>
</dbReference>
<dbReference type="FunFam" id="3.10.50.40:FF:000001">
    <property type="entry name" value="Trigger factor"/>
    <property type="match status" value="1"/>
</dbReference>
<dbReference type="Gene3D" id="3.10.50.40">
    <property type="match status" value="1"/>
</dbReference>
<dbReference type="Gene3D" id="3.30.70.1050">
    <property type="entry name" value="Trigger factor ribosome-binding domain"/>
    <property type="match status" value="1"/>
</dbReference>
<dbReference type="Gene3D" id="1.10.3120.10">
    <property type="entry name" value="Trigger factor, C-terminal domain"/>
    <property type="match status" value="1"/>
</dbReference>
<dbReference type="HAMAP" id="MF_00303">
    <property type="entry name" value="Trigger_factor_Tig"/>
    <property type="match status" value="1"/>
</dbReference>
<dbReference type="InterPro" id="IPR046357">
    <property type="entry name" value="PPIase_dom_sf"/>
</dbReference>
<dbReference type="InterPro" id="IPR001179">
    <property type="entry name" value="PPIase_FKBP_dom"/>
</dbReference>
<dbReference type="InterPro" id="IPR005215">
    <property type="entry name" value="Trig_fac"/>
</dbReference>
<dbReference type="InterPro" id="IPR008880">
    <property type="entry name" value="Trigger_fac_C"/>
</dbReference>
<dbReference type="InterPro" id="IPR037041">
    <property type="entry name" value="Trigger_fac_C_sf"/>
</dbReference>
<dbReference type="InterPro" id="IPR008881">
    <property type="entry name" value="Trigger_fac_ribosome-bd_bac"/>
</dbReference>
<dbReference type="InterPro" id="IPR036611">
    <property type="entry name" value="Trigger_fac_ribosome-bd_sf"/>
</dbReference>
<dbReference type="InterPro" id="IPR027304">
    <property type="entry name" value="Trigger_fact/SurA_dom_sf"/>
</dbReference>
<dbReference type="NCBIfam" id="TIGR00115">
    <property type="entry name" value="tig"/>
    <property type="match status" value="1"/>
</dbReference>
<dbReference type="PANTHER" id="PTHR30560">
    <property type="entry name" value="TRIGGER FACTOR CHAPERONE AND PEPTIDYL-PROLYL CIS/TRANS ISOMERASE"/>
    <property type="match status" value="1"/>
</dbReference>
<dbReference type="PANTHER" id="PTHR30560:SF3">
    <property type="entry name" value="TRIGGER FACTOR-LIKE PROTEIN TIG, CHLOROPLASTIC"/>
    <property type="match status" value="1"/>
</dbReference>
<dbReference type="Pfam" id="PF00254">
    <property type="entry name" value="FKBP_C"/>
    <property type="match status" value="1"/>
</dbReference>
<dbReference type="Pfam" id="PF05698">
    <property type="entry name" value="Trigger_C"/>
    <property type="match status" value="1"/>
</dbReference>
<dbReference type="Pfam" id="PF05697">
    <property type="entry name" value="Trigger_N"/>
    <property type="match status" value="1"/>
</dbReference>
<dbReference type="PIRSF" id="PIRSF003095">
    <property type="entry name" value="Trigger_factor"/>
    <property type="match status" value="1"/>
</dbReference>
<dbReference type="SUPFAM" id="SSF54534">
    <property type="entry name" value="FKBP-like"/>
    <property type="match status" value="1"/>
</dbReference>
<dbReference type="SUPFAM" id="SSF109998">
    <property type="entry name" value="Triger factor/SurA peptide-binding domain-like"/>
    <property type="match status" value="1"/>
</dbReference>
<dbReference type="SUPFAM" id="SSF102735">
    <property type="entry name" value="Trigger factor ribosome-binding domain"/>
    <property type="match status" value="1"/>
</dbReference>
<dbReference type="PROSITE" id="PS50059">
    <property type="entry name" value="FKBP_PPIASE"/>
    <property type="match status" value="1"/>
</dbReference>
<protein>
    <recommendedName>
        <fullName evidence="1">Trigger factor</fullName>
        <shortName evidence="1">TF</shortName>
        <ecNumber evidence="1">5.2.1.8</ecNumber>
    </recommendedName>
    <alternativeName>
        <fullName evidence="1">PPIase</fullName>
    </alternativeName>
</protein>
<name>TIG_PSEPF</name>
<reference key="1">
    <citation type="journal article" date="2009" name="Genome Biol.">
        <title>Genomic and genetic analyses of diversity and plant interactions of Pseudomonas fluorescens.</title>
        <authorList>
            <person name="Silby M.W."/>
            <person name="Cerdeno-Tarraga A.M."/>
            <person name="Vernikos G.S."/>
            <person name="Giddens S.R."/>
            <person name="Jackson R.W."/>
            <person name="Preston G.M."/>
            <person name="Zhang X.-X."/>
            <person name="Moon C.D."/>
            <person name="Gehrig S.M."/>
            <person name="Godfrey S.A.C."/>
            <person name="Knight C.G."/>
            <person name="Malone J.G."/>
            <person name="Robinson Z."/>
            <person name="Spiers A.J."/>
            <person name="Harris S."/>
            <person name="Challis G.L."/>
            <person name="Yaxley A.M."/>
            <person name="Harris D."/>
            <person name="Seeger K."/>
            <person name="Murphy L."/>
            <person name="Rutter S."/>
            <person name="Squares R."/>
            <person name="Quail M.A."/>
            <person name="Saunders E."/>
            <person name="Mavromatis K."/>
            <person name="Brettin T.S."/>
            <person name="Bentley S.D."/>
            <person name="Hothersall J."/>
            <person name="Stephens E."/>
            <person name="Thomas C.M."/>
            <person name="Parkhill J."/>
            <person name="Levy S.B."/>
            <person name="Rainey P.B."/>
            <person name="Thomson N.R."/>
        </authorList>
    </citation>
    <scope>NUCLEOTIDE SEQUENCE [LARGE SCALE GENOMIC DNA]</scope>
    <source>
        <strain>Pf0-1</strain>
    </source>
</reference>
<evidence type="ECO:0000255" key="1">
    <source>
        <dbReference type="HAMAP-Rule" id="MF_00303"/>
    </source>
</evidence>
<organism>
    <name type="scientific">Pseudomonas fluorescens (strain Pf0-1)</name>
    <dbReference type="NCBI Taxonomy" id="205922"/>
    <lineage>
        <taxon>Bacteria</taxon>
        <taxon>Pseudomonadati</taxon>
        <taxon>Pseudomonadota</taxon>
        <taxon>Gammaproteobacteria</taxon>
        <taxon>Pseudomonadales</taxon>
        <taxon>Pseudomonadaceae</taxon>
        <taxon>Pseudomonas</taxon>
    </lineage>
</organism>
<accession>Q3K9W8</accession>